<evidence type="ECO:0000255" key="1">
    <source>
        <dbReference type="HAMAP-Rule" id="MF_00456"/>
    </source>
</evidence>
<feature type="chain" id="PRO_1000206277" description="Glutamate 5-kinase">
    <location>
        <begin position="1"/>
        <end position="272"/>
    </location>
</feature>
<feature type="binding site" evidence="1">
    <location>
        <position position="15"/>
    </location>
    <ligand>
        <name>ATP</name>
        <dbReference type="ChEBI" id="CHEBI:30616"/>
    </ligand>
</feature>
<feature type="binding site" evidence="1">
    <location>
        <position position="55"/>
    </location>
    <ligand>
        <name>substrate</name>
    </ligand>
</feature>
<feature type="binding site" evidence="1">
    <location>
        <position position="142"/>
    </location>
    <ligand>
        <name>substrate</name>
    </ligand>
</feature>
<feature type="binding site" evidence="1">
    <location>
        <position position="158"/>
    </location>
    <ligand>
        <name>substrate</name>
    </ligand>
</feature>
<feature type="binding site" evidence="1">
    <location>
        <begin position="178"/>
        <end position="179"/>
    </location>
    <ligand>
        <name>ATP</name>
        <dbReference type="ChEBI" id="CHEBI:30616"/>
    </ligand>
</feature>
<feature type="binding site" evidence="1">
    <location>
        <begin position="220"/>
        <end position="226"/>
    </location>
    <ligand>
        <name>ATP</name>
        <dbReference type="ChEBI" id="CHEBI:30616"/>
    </ligand>
</feature>
<dbReference type="EC" id="2.7.2.11" evidence="1"/>
<dbReference type="EMBL" id="FM204884">
    <property type="protein sequence ID" value="CAW98240.1"/>
    <property type="molecule type" value="Genomic_DNA"/>
</dbReference>
<dbReference type="SMR" id="C0MGV5"/>
<dbReference type="KEGG" id="seq:SZO_03770"/>
<dbReference type="eggNOG" id="COG0263">
    <property type="taxonomic scope" value="Bacteria"/>
</dbReference>
<dbReference type="HOGENOM" id="CLU_025400_0_2_9"/>
<dbReference type="UniPathway" id="UPA00098">
    <property type="reaction ID" value="UER00359"/>
</dbReference>
<dbReference type="Proteomes" id="UP000001368">
    <property type="component" value="Chromosome"/>
</dbReference>
<dbReference type="GO" id="GO:0005829">
    <property type="term" value="C:cytosol"/>
    <property type="evidence" value="ECO:0007669"/>
    <property type="project" value="TreeGrafter"/>
</dbReference>
<dbReference type="GO" id="GO:0005524">
    <property type="term" value="F:ATP binding"/>
    <property type="evidence" value="ECO:0007669"/>
    <property type="project" value="UniProtKB-KW"/>
</dbReference>
<dbReference type="GO" id="GO:0004349">
    <property type="term" value="F:glutamate 5-kinase activity"/>
    <property type="evidence" value="ECO:0007669"/>
    <property type="project" value="UniProtKB-UniRule"/>
</dbReference>
<dbReference type="GO" id="GO:0055129">
    <property type="term" value="P:L-proline biosynthetic process"/>
    <property type="evidence" value="ECO:0007669"/>
    <property type="project" value="UniProtKB-UniRule"/>
</dbReference>
<dbReference type="CDD" id="cd04242">
    <property type="entry name" value="AAK_G5K_ProB"/>
    <property type="match status" value="1"/>
</dbReference>
<dbReference type="FunFam" id="3.40.1160.10:FF:000006">
    <property type="entry name" value="Glutamate 5-kinase"/>
    <property type="match status" value="1"/>
</dbReference>
<dbReference type="Gene3D" id="3.40.1160.10">
    <property type="entry name" value="Acetylglutamate kinase-like"/>
    <property type="match status" value="1"/>
</dbReference>
<dbReference type="HAMAP" id="MF_00456">
    <property type="entry name" value="ProB"/>
    <property type="match status" value="1"/>
</dbReference>
<dbReference type="InterPro" id="IPR036393">
    <property type="entry name" value="AceGlu_kinase-like_sf"/>
</dbReference>
<dbReference type="InterPro" id="IPR001048">
    <property type="entry name" value="Asp/Glu/Uridylate_kinase"/>
</dbReference>
<dbReference type="InterPro" id="IPR041739">
    <property type="entry name" value="G5K_ProB"/>
</dbReference>
<dbReference type="InterPro" id="IPR001057">
    <property type="entry name" value="Glu/AcGlu_kinase"/>
</dbReference>
<dbReference type="InterPro" id="IPR011529">
    <property type="entry name" value="Glu_5kinase"/>
</dbReference>
<dbReference type="InterPro" id="IPR005715">
    <property type="entry name" value="Glu_5kinase/COase_Synthase"/>
</dbReference>
<dbReference type="InterPro" id="IPR019797">
    <property type="entry name" value="Glutamate_5-kinase_CS"/>
</dbReference>
<dbReference type="NCBIfam" id="TIGR01027">
    <property type="entry name" value="proB"/>
    <property type="match status" value="1"/>
</dbReference>
<dbReference type="PANTHER" id="PTHR43654">
    <property type="entry name" value="GLUTAMATE 5-KINASE"/>
    <property type="match status" value="1"/>
</dbReference>
<dbReference type="PANTHER" id="PTHR43654:SF1">
    <property type="entry name" value="ISOPENTENYL PHOSPHATE KINASE"/>
    <property type="match status" value="1"/>
</dbReference>
<dbReference type="Pfam" id="PF00696">
    <property type="entry name" value="AA_kinase"/>
    <property type="match status" value="1"/>
</dbReference>
<dbReference type="PIRSF" id="PIRSF000729">
    <property type="entry name" value="GK"/>
    <property type="match status" value="1"/>
</dbReference>
<dbReference type="PRINTS" id="PR00474">
    <property type="entry name" value="GLU5KINASE"/>
</dbReference>
<dbReference type="SUPFAM" id="SSF53633">
    <property type="entry name" value="Carbamate kinase-like"/>
    <property type="match status" value="1"/>
</dbReference>
<dbReference type="PROSITE" id="PS00902">
    <property type="entry name" value="GLUTAMATE_5_KINASE"/>
    <property type="match status" value="1"/>
</dbReference>
<protein>
    <recommendedName>
        <fullName evidence="1">Glutamate 5-kinase</fullName>
        <ecNumber evidence="1">2.7.2.11</ecNumber>
    </recommendedName>
    <alternativeName>
        <fullName evidence="1">Gamma-glutamyl kinase</fullName>
        <shortName evidence="1">GK</shortName>
    </alternativeName>
</protein>
<accession>C0MGV5</accession>
<comment type="function">
    <text evidence="1">Catalyzes the transfer of a phosphate group to glutamate to form L-glutamate 5-phosphate.</text>
</comment>
<comment type="catalytic activity">
    <reaction evidence="1">
        <text>L-glutamate + ATP = L-glutamyl 5-phosphate + ADP</text>
        <dbReference type="Rhea" id="RHEA:14877"/>
        <dbReference type="ChEBI" id="CHEBI:29985"/>
        <dbReference type="ChEBI" id="CHEBI:30616"/>
        <dbReference type="ChEBI" id="CHEBI:58274"/>
        <dbReference type="ChEBI" id="CHEBI:456216"/>
        <dbReference type="EC" id="2.7.2.11"/>
    </reaction>
</comment>
<comment type="pathway">
    <text evidence="1">Amino-acid biosynthesis; L-proline biosynthesis; L-glutamate 5-semialdehyde from L-glutamate: step 1/2.</text>
</comment>
<comment type="subcellular location">
    <subcellularLocation>
        <location evidence="1">Cytoplasm</location>
    </subcellularLocation>
</comment>
<comment type="similarity">
    <text evidence="1">Belongs to the glutamate 5-kinase family.</text>
</comment>
<organism>
    <name type="scientific">Streptococcus equi subsp. zooepidemicus (strain H70)</name>
    <dbReference type="NCBI Taxonomy" id="553483"/>
    <lineage>
        <taxon>Bacteria</taxon>
        <taxon>Bacillati</taxon>
        <taxon>Bacillota</taxon>
        <taxon>Bacilli</taxon>
        <taxon>Lactobacillales</taxon>
        <taxon>Streptococcaceae</taxon>
        <taxon>Streptococcus</taxon>
    </lineage>
</organism>
<proteinExistence type="inferred from homology"/>
<sequence>MMKRQFEDVKRIVIKIGTSSLVLANGKINLEKIDHLAFVISSLMNKGKEVILVSSGAMGFGLDLLKMAKRPSQLAKQQAVSSVGQVAMMSLYSQIFAHYQTTVSQILLTRDVVVFPESLANVTNAFESLISLGIVPIVNENDAVSVDEMDHSTKFGDNDRLSAIVARITRADLLIMLSDIDGLFDKNPTIYEDARLRSHVTEITEDIIASAGGAGSRFGTGGMLSKIQSAQMMFEHQGQMILMNGANPRDILRVLEGEKLGTWFKQIERGDA</sequence>
<gene>
    <name evidence="1" type="primary">proB</name>
    <name type="ordered locus">SZO_03770</name>
</gene>
<name>PROB_STRS7</name>
<keyword id="KW-0028">Amino-acid biosynthesis</keyword>
<keyword id="KW-0067">ATP-binding</keyword>
<keyword id="KW-0963">Cytoplasm</keyword>
<keyword id="KW-0418">Kinase</keyword>
<keyword id="KW-0547">Nucleotide-binding</keyword>
<keyword id="KW-0641">Proline biosynthesis</keyword>
<keyword id="KW-0808">Transferase</keyword>
<reference key="1">
    <citation type="journal article" date="2009" name="PLoS Pathog.">
        <title>Genomic evidence for the evolution of Streptococcus equi: host restriction, increased virulence, and genetic exchange with human pathogens.</title>
        <authorList>
            <person name="Holden M.T.G."/>
            <person name="Heather Z."/>
            <person name="Paillot R."/>
            <person name="Steward K.F."/>
            <person name="Webb K."/>
            <person name="Ainslie F."/>
            <person name="Jourdan T."/>
            <person name="Bason N.C."/>
            <person name="Holroyd N.E."/>
            <person name="Mungall K."/>
            <person name="Quail M.A."/>
            <person name="Sanders M."/>
            <person name="Simmonds M."/>
            <person name="Willey D."/>
            <person name="Brooks K."/>
            <person name="Aanensen D.M."/>
            <person name="Spratt B.G."/>
            <person name="Jolley K.A."/>
            <person name="Maiden M.C.J."/>
            <person name="Kehoe M."/>
            <person name="Chanter N."/>
            <person name="Bentley S.D."/>
            <person name="Robinson C."/>
            <person name="Maskell D.J."/>
            <person name="Parkhill J."/>
            <person name="Waller A.S."/>
        </authorList>
    </citation>
    <scope>NUCLEOTIDE SEQUENCE [LARGE SCALE GENOMIC DNA]</scope>
    <source>
        <strain>H70</strain>
    </source>
</reference>